<dbReference type="EC" id="5.3.1.9" evidence="1"/>
<dbReference type="EMBL" id="AJ938182">
    <property type="protein sequence ID" value="CAI80518.1"/>
    <property type="molecule type" value="Genomic_DNA"/>
</dbReference>
<dbReference type="RefSeq" id="WP_000148853.1">
    <property type="nucleotide sequence ID" value="NC_007622.1"/>
</dbReference>
<dbReference type="SMR" id="Q2YWS3"/>
<dbReference type="KEGG" id="sab:SAB0830"/>
<dbReference type="HOGENOM" id="CLU_037303_0_1_9"/>
<dbReference type="UniPathway" id="UPA00109">
    <property type="reaction ID" value="UER00181"/>
</dbReference>
<dbReference type="UniPathway" id="UPA00138"/>
<dbReference type="GO" id="GO:0005829">
    <property type="term" value="C:cytosol"/>
    <property type="evidence" value="ECO:0007669"/>
    <property type="project" value="TreeGrafter"/>
</dbReference>
<dbReference type="GO" id="GO:0097367">
    <property type="term" value="F:carbohydrate derivative binding"/>
    <property type="evidence" value="ECO:0007669"/>
    <property type="project" value="InterPro"/>
</dbReference>
<dbReference type="GO" id="GO:0004347">
    <property type="term" value="F:glucose-6-phosphate isomerase activity"/>
    <property type="evidence" value="ECO:0007669"/>
    <property type="project" value="UniProtKB-UniRule"/>
</dbReference>
<dbReference type="GO" id="GO:0048029">
    <property type="term" value="F:monosaccharide binding"/>
    <property type="evidence" value="ECO:0007669"/>
    <property type="project" value="TreeGrafter"/>
</dbReference>
<dbReference type="GO" id="GO:0006094">
    <property type="term" value="P:gluconeogenesis"/>
    <property type="evidence" value="ECO:0007669"/>
    <property type="project" value="UniProtKB-UniRule"/>
</dbReference>
<dbReference type="GO" id="GO:0051156">
    <property type="term" value="P:glucose 6-phosphate metabolic process"/>
    <property type="evidence" value="ECO:0007669"/>
    <property type="project" value="TreeGrafter"/>
</dbReference>
<dbReference type="GO" id="GO:0006096">
    <property type="term" value="P:glycolytic process"/>
    <property type="evidence" value="ECO:0007669"/>
    <property type="project" value="UniProtKB-UniRule"/>
</dbReference>
<dbReference type="CDD" id="cd05015">
    <property type="entry name" value="SIS_PGI_1"/>
    <property type="match status" value="1"/>
</dbReference>
<dbReference type="CDD" id="cd05016">
    <property type="entry name" value="SIS_PGI_2"/>
    <property type="match status" value="1"/>
</dbReference>
<dbReference type="FunFam" id="3.40.50.10490:FF:000015">
    <property type="entry name" value="Glucose-6-phosphate isomerase"/>
    <property type="match status" value="1"/>
</dbReference>
<dbReference type="FunFam" id="3.40.50.10490:FF:000016">
    <property type="entry name" value="Glucose-6-phosphate isomerase"/>
    <property type="match status" value="1"/>
</dbReference>
<dbReference type="Gene3D" id="3.40.50.10490">
    <property type="entry name" value="Glucose-6-phosphate isomerase like protein, domain 1"/>
    <property type="match status" value="3"/>
</dbReference>
<dbReference type="HAMAP" id="MF_00473">
    <property type="entry name" value="G6P_isomerase"/>
    <property type="match status" value="1"/>
</dbReference>
<dbReference type="InterPro" id="IPR001672">
    <property type="entry name" value="G6P_Isomerase"/>
</dbReference>
<dbReference type="InterPro" id="IPR018189">
    <property type="entry name" value="Phosphoglucose_isomerase_CS"/>
</dbReference>
<dbReference type="InterPro" id="IPR046348">
    <property type="entry name" value="SIS_dom_sf"/>
</dbReference>
<dbReference type="InterPro" id="IPR035476">
    <property type="entry name" value="SIS_PGI_1"/>
</dbReference>
<dbReference type="InterPro" id="IPR035482">
    <property type="entry name" value="SIS_PGI_2"/>
</dbReference>
<dbReference type="NCBIfam" id="NF010697">
    <property type="entry name" value="PRK14097.1"/>
    <property type="match status" value="1"/>
</dbReference>
<dbReference type="PANTHER" id="PTHR11469">
    <property type="entry name" value="GLUCOSE-6-PHOSPHATE ISOMERASE"/>
    <property type="match status" value="1"/>
</dbReference>
<dbReference type="PANTHER" id="PTHR11469:SF1">
    <property type="entry name" value="GLUCOSE-6-PHOSPHATE ISOMERASE"/>
    <property type="match status" value="1"/>
</dbReference>
<dbReference type="Pfam" id="PF00342">
    <property type="entry name" value="PGI"/>
    <property type="match status" value="1"/>
</dbReference>
<dbReference type="PRINTS" id="PR00662">
    <property type="entry name" value="G6PISOMERASE"/>
</dbReference>
<dbReference type="SUPFAM" id="SSF53697">
    <property type="entry name" value="SIS domain"/>
    <property type="match status" value="1"/>
</dbReference>
<dbReference type="PROSITE" id="PS00765">
    <property type="entry name" value="P_GLUCOSE_ISOMERASE_1"/>
    <property type="match status" value="1"/>
</dbReference>
<dbReference type="PROSITE" id="PS00174">
    <property type="entry name" value="P_GLUCOSE_ISOMERASE_2"/>
    <property type="match status" value="1"/>
</dbReference>
<dbReference type="PROSITE" id="PS51463">
    <property type="entry name" value="P_GLUCOSE_ISOMERASE_3"/>
    <property type="match status" value="1"/>
</dbReference>
<comment type="function">
    <text evidence="1">Catalyzes the reversible isomerization of glucose-6-phosphate to fructose-6-phosphate.</text>
</comment>
<comment type="catalytic activity">
    <reaction evidence="1">
        <text>alpha-D-glucose 6-phosphate = beta-D-fructose 6-phosphate</text>
        <dbReference type="Rhea" id="RHEA:11816"/>
        <dbReference type="ChEBI" id="CHEBI:57634"/>
        <dbReference type="ChEBI" id="CHEBI:58225"/>
        <dbReference type="EC" id="5.3.1.9"/>
    </reaction>
</comment>
<comment type="pathway">
    <text evidence="1">Carbohydrate biosynthesis; gluconeogenesis.</text>
</comment>
<comment type="pathway">
    <text evidence="1">Carbohydrate degradation; glycolysis; D-glyceraldehyde 3-phosphate and glycerone phosphate from D-glucose: step 2/4.</text>
</comment>
<comment type="subcellular location">
    <subcellularLocation>
        <location evidence="1">Cytoplasm</location>
    </subcellularLocation>
</comment>
<comment type="similarity">
    <text evidence="1">Belongs to the GPI family.</text>
</comment>
<sequence>MTHIQLDFSKTLEFFGEHELKQQQEIVKSIHKTIHEGTGAGSDFLGWVDLPVDYDKEEFSRIVEASKRIKENSDVLVVIGIGGSYLGARAAIEMLTSSFRNSNEYPEIVFVGNHLSSTYTKELVDYLADKDFSVNVISKSGTTTEPAVAFRLFKQLVEERYGKEEAQKRIFATTDKEKGALKQLATNEGYETFIVPDDVGGRYSVLTAVGLLPIATAGINIEAMMIGAAKAREELSSDKLEENIAYQYATIRNILYAKGYTTEMLINYEPSMQYFNEWWKQLFGESEGKDFKGIYPSSANYTTDLHSLGQYVQEGRRFLFETVVKVNHPKYDITIEKDSDDLDGLNYLAGKTIDEVNTKAFEGTLLAHTDGGVPNMIVNIPQLDEETFGYVVYFFELACAMSGYQLGVNPFNQPGVEAYKQNMFALLGKPGFEDLKKELEERL</sequence>
<proteinExistence type="inferred from homology"/>
<accession>Q2YWS3</accession>
<name>G6PI_STAAB</name>
<keyword id="KW-0963">Cytoplasm</keyword>
<keyword id="KW-0312">Gluconeogenesis</keyword>
<keyword id="KW-0324">Glycolysis</keyword>
<keyword id="KW-0413">Isomerase</keyword>
<reference key="1">
    <citation type="journal article" date="2007" name="PLoS ONE">
        <title>Molecular correlates of host specialization in Staphylococcus aureus.</title>
        <authorList>
            <person name="Herron-Olson L."/>
            <person name="Fitzgerald J.R."/>
            <person name="Musser J.M."/>
            <person name="Kapur V."/>
        </authorList>
    </citation>
    <scope>NUCLEOTIDE SEQUENCE [LARGE SCALE GENOMIC DNA]</scope>
    <source>
        <strain>bovine RF122 / ET3-1</strain>
    </source>
</reference>
<organism>
    <name type="scientific">Staphylococcus aureus (strain bovine RF122 / ET3-1)</name>
    <dbReference type="NCBI Taxonomy" id="273036"/>
    <lineage>
        <taxon>Bacteria</taxon>
        <taxon>Bacillati</taxon>
        <taxon>Bacillota</taxon>
        <taxon>Bacilli</taxon>
        <taxon>Bacillales</taxon>
        <taxon>Staphylococcaceae</taxon>
        <taxon>Staphylococcus</taxon>
    </lineage>
</organism>
<evidence type="ECO:0000255" key="1">
    <source>
        <dbReference type="HAMAP-Rule" id="MF_00473"/>
    </source>
</evidence>
<protein>
    <recommendedName>
        <fullName evidence="1">Glucose-6-phosphate isomerase</fullName>
        <shortName evidence="1">GPI</shortName>
        <ecNumber evidence="1">5.3.1.9</ecNumber>
    </recommendedName>
    <alternativeName>
        <fullName evidence="1">Phosphoglucose isomerase</fullName>
        <shortName evidence="1">PGI</shortName>
    </alternativeName>
    <alternativeName>
        <fullName evidence="1">Phosphohexose isomerase</fullName>
        <shortName evidence="1">PHI</shortName>
    </alternativeName>
</protein>
<gene>
    <name evidence="1" type="primary">pgi</name>
    <name type="ordered locus">SAB0830</name>
</gene>
<feature type="chain" id="PRO_0000230936" description="Glucose-6-phosphate isomerase">
    <location>
        <begin position="1"/>
        <end position="443"/>
    </location>
</feature>
<feature type="active site" description="Proton donor" evidence="1">
    <location>
        <position position="285"/>
    </location>
</feature>
<feature type="active site" evidence="1">
    <location>
        <position position="306"/>
    </location>
</feature>
<feature type="active site" evidence="1">
    <location>
        <position position="420"/>
    </location>
</feature>